<organism>
    <name type="scientific">Salmonella paratyphi A (strain ATCC 9150 / SARB42)</name>
    <dbReference type="NCBI Taxonomy" id="295319"/>
    <lineage>
        <taxon>Bacteria</taxon>
        <taxon>Pseudomonadati</taxon>
        <taxon>Pseudomonadota</taxon>
        <taxon>Gammaproteobacteria</taxon>
        <taxon>Enterobacterales</taxon>
        <taxon>Enterobacteriaceae</taxon>
        <taxon>Salmonella</taxon>
    </lineage>
</organism>
<reference key="1">
    <citation type="journal article" date="2004" name="Nat. Genet.">
        <title>Comparison of genome degradation in Paratyphi A and Typhi, human-restricted serovars of Salmonella enterica that cause typhoid.</title>
        <authorList>
            <person name="McClelland M."/>
            <person name="Sanderson K.E."/>
            <person name="Clifton S.W."/>
            <person name="Latreille P."/>
            <person name="Porwollik S."/>
            <person name="Sabo A."/>
            <person name="Meyer R."/>
            <person name="Bieri T."/>
            <person name="Ozersky P."/>
            <person name="McLellan M."/>
            <person name="Harkins C.R."/>
            <person name="Wang C."/>
            <person name="Nguyen C."/>
            <person name="Berghoff A."/>
            <person name="Elliott G."/>
            <person name="Kohlberg S."/>
            <person name="Strong C."/>
            <person name="Du F."/>
            <person name="Carter J."/>
            <person name="Kremizki C."/>
            <person name="Layman D."/>
            <person name="Leonard S."/>
            <person name="Sun H."/>
            <person name="Fulton L."/>
            <person name="Nash W."/>
            <person name="Miner T."/>
            <person name="Minx P."/>
            <person name="Delehaunty K."/>
            <person name="Fronick C."/>
            <person name="Magrini V."/>
            <person name="Nhan M."/>
            <person name="Warren W."/>
            <person name="Florea L."/>
            <person name="Spieth J."/>
            <person name="Wilson R.K."/>
        </authorList>
    </citation>
    <scope>NUCLEOTIDE SEQUENCE [LARGE SCALE GENOMIC DNA]</scope>
    <source>
        <strain>ATCC 9150 / SARB42</strain>
    </source>
</reference>
<accession>Q5PK70</accession>
<proteinExistence type="inferred from homology"/>
<comment type="function">
    <text evidence="1">Represses the transcription of fabB, involved in unsaturated fatty acid (UFA) biosynthesis. By controlling UFA production, FabR directly influences the physical properties of the membrane bilayer.</text>
</comment>
<comment type="subunit">
    <text evidence="1">Homodimer.</text>
</comment>
<comment type="subcellular location">
    <subcellularLocation>
        <location evidence="1">Cytoplasm</location>
    </subcellularLocation>
</comment>
<keyword id="KW-0963">Cytoplasm</keyword>
<keyword id="KW-0238">DNA-binding</keyword>
<keyword id="KW-0275">Fatty acid biosynthesis</keyword>
<keyword id="KW-0276">Fatty acid metabolism</keyword>
<keyword id="KW-0444">Lipid biosynthesis</keyword>
<keyword id="KW-0443">Lipid metabolism</keyword>
<keyword id="KW-0678">Repressor</keyword>
<keyword id="KW-0804">Transcription</keyword>
<keyword id="KW-0805">Transcription regulation</keyword>
<name>FABR_SALPA</name>
<sequence length="210" mass="23901">MGVRAQQKEKTRRSLVEAAFSQLSAERSFASLSLREVAREAGIAPTSFYRHFRDVDELGLTMVDESGLMLRQLMRQARQRIAKGGSVIRTSVSTFMEFIGNNPNAFRLLLRERSGTSAAFRAAVAREIQHFIAELADYLELENHMPRAFTEAQAEAMVTIVFSAGAEALDIGAEQRRQLEERLVLQLRMIAKGAYYWYRREQEKIAQHSE</sequence>
<protein>
    <recommendedName>
        <fullName evidence="1">HTH-type transcriptional repressor FabR</fullName>
    </recommendedName>
</protein>
<gene>
    <name evidence="1" type="primary">fabR</name>
    <name type="ordered locus">SPA3965</name>
</gene>
<feature type="chain" id="PRO_0000293571" description="HTH-type transcriptional repressor FabR">
    <location>
        <begin position="1"/>
        <end position="210"/>
    </location>
</feature>
<feature type="domain" description="HTH tetR-type" evidence="1">
    <location>
        <begin position="10"/>
        <end position="70"/>
    </location>
</feature>
<feature type="DNA-binding region" description="H-T-H motif" evidence="1">
    <location>
        <begin position="33"/>
        <end position="52"/>
    </location>
</feature>
<evidence type="ECO:0000255" key="1">
    <source>
        <dbReference type="HAMAP-Rule" id="MF_01190"/>
    </source>
</evidence>
<dbReference type="EMBL" id="CP000026">
    <property type="protein sequence ID" value="AAV79727.1"/>
    <property type="molecule type" value="Genomic_DNA"/>
</dbReference>
<dbReference type="SMR" id="Q5PK70"/>
<dbReference type="KEGG" id="spt:SPA3965"/>
<dbReference type="HOGENOM" id="CLU_081861_0_0_6"/>
<dbReference type="Proteomes" id="UP000008185">
    <property type="component" value="Chromosome"/>
</dbReference>
<dbReference type="GO" id="GO:0005737">
    <property type="term" value="C:cytoplasm"/>
    <property type="evidence" value="ECO:0007669"/>
    <property type="project" value="UniProtKB-SubCell"/>
</dbReference>
<dbReference type="GO" id="GO:0003677">
    <property type="term" value="F:DNA binding"/>
    <property type="evidence" value="ECO:0007669"/>
    <property type="project" value="UniProtKB-KW"/>
</dbReference>
<dbReference type="GO" id="GO:0003700">
    <property type="term" value="F:DNA-binding transcription factor activity"/>
    <property type="evidence" value="ECO:0007669"/>
    <property type="project" value="UniProtKB-UniRule"/>
</dbReference>
<dbReference type="GO" id="GO:0006633">
    <property type="term" value="P:fatty acid biosynthetic process"/>
    <property type="evidence" value="ECO:0007669"/>
    <property type="project" value="UniProtKB-UniRule"/>
</dbReference>
<dbReference type="GO" id="GO:0045717">
    <property type="term" value="P:negative regulation of fatty acid biosynthetic process"/>
    <property type="evidence" value="ECO:0007669"/>
    <property type="project" value="UniProtKB-UniRule"/>
</dbReference>
<dbReference type="FunFam" id="1.10.10.60:FF:000034">
    <property type="entry name" value="HTH-type transcriptional repressor FabR"/>
    <property type="match status" value="1"/>
</dbReference>
<dbReference type="FunFam" id="1.10.357.10:FF:000001">
    <property type="entry name" value="HTH-type transcriptional repressor FabR"/>
    <property type="match status" value="1"/>
</dbReference>
<dbReference type="Gene3D" id="1.10.10.60">
    <property type="entry name" value="Homeodomain-like"/>
    <property type="match status" value="1"/>
</dbReference>
<dbReference type="Gene3D" id="1.10.357.10">
    <property type="entry name" value="Tetracycline Repressor, domain 2"/>
    <property type="match status" value="1"/>
</dbReference>
<dbReference type="HAMAP" id="MF_01190">
    <property type="entry name" value="HTH_type_FabR"/>
    <property type="match status" value="1"/>
</dbReference>
<dbReference type="InterPro" id="IPR054129">
    <property type="entry name" value="DesT_TetR_C"/>
</dbReference>
<dbReference type="InterPro" id="IPR009057">
    <property type="entry name" value="Homeodomain-like_sf"/>
</dbReference>
<dbReference type="InterPro" id="IPR001647">
    <property type="entry name" value="HTH_TetR"/>
</dbReference>
<dbReference type="InterPro" id="IPR050692">
    <property type="entry name" value="HTH_transcr_repressor_FabR"/>
</dbReference>
<dbReference type="InterPro" id="IPR023764">
    <property type="entry name" value="Tscrpt_reg_HTH_FabR"/>
</dbReference>
<dbReference type="NCBIfam" id="NF008402">
    <property type="entry name" value="PRK11202.1"/>
    <property type="match status" value="1"/>
</dbReference>
<dbReference type="PANTHER" id="PTHR47752">
    <property type="entry name" value="HTH-TYPE TRANSCRIPTIONAL REPRESSOR FABR"/>
    <property type="match status" value="1"/>
</dbReference>
<dbReference type="PANTHER" id="PTHR47752:SF1">
    <property type="entry name" value="HTH-TYPE TRANSCRIPTIONAL REPRESSOR FABR"/>
    <property type="match status" value="1"/>
</dbReference>
<dbReference type="Pfam" id="PF21943">
    <property type="entry name" value="TetR_C_46"/>
    <property type="match status" value="1"/>
</dbReference>
<dbReference type="Pfam" id="PF00440">
    <property type="entry name" value="TetR_N"/>
    <property type="match status" value="1"/>
</dbReference>
<dbReference type="SUPFAM" id="SSF46689">
    <property type="entry name" value="Homeodomain-like"/>
    <property type="match status" value="1"/>
</dbReference>
<dbReference type="PROSITE" id="PS50977">
    <property type="entry name" value="HTH_TETR_2"/>
    <property type="match status" value="1"/>
</dbReference>